<organism>
    <name type="scientific">Arabidopsis thaliana</name>
    <name type="common">Mouse-ear cress</name>
    <dbReference type="NCBI Taxonomy" id="3702"/>
    <lineage>
        <taxon>Eukaryota</taxon>
        <taxon>Viridiplantae</taxon>
        <taxon>Streptophyta</taxon>
        <taxon>Embryophyta</taxon>
        <taxon>Tracheophyta</taxon>
        <taxon>Spermatophyta</taxon>
        <taxon>Magnoliopsida</taxon>
        <taxon>eudicotyledons</taxon>
        <taxon>Gunneridae</taxon>
        <taxon>Pentapetalae</taxon>
        <taxon>rosids</taxon>
        <taxon>malvids</taxon>
        <taxon>Brassicales</taxon>
        <taxon>Brassicaceae</taxon>
        <taxon>Camelineae</taxon>
        <taxon>Arabidopsis</taxon>
    </lineage>
</organism>
<proteinExistence type="evidence at protein level"/>
<protein>
    <recommendedName>
        <fullName>Tubulin gamma-2 chain</fullName>
    </recommendedName>
    <alternativeName>
        <fullName>Gamma-2-tubulin</fullName>
    </alternativeName>
</protein>
<sequence length="474" mass="53277">MPREIITLQVGQCGNQIGMEFWKQLCLEHGISKDGILEDFATQGGDRKDVFFYQADDQHYIPRALLIDLEPRVINGIQNGEYRNLYNHENIFLSDHGGGAGNNWASGYHQGKGVEEEIMDMIDREADGSDSLEGFVLCHSIAGGTGSGMGSYLLETLNDRYSKKLVQTYSVFPNQMETSDVVVQPYNSLLTLKRLTLNADCVVVLDNTALNRIAVERLHLTNPTFAQTNSLVSTVMSASTTTLRYPGYMNNDLVGLLASLIPTPRCHFLMTGYTPLTVERQANVIRKTTVLDVMRRLLQTKNIMVSSYARNKEASQAKYISILNIIQGEVDPTQVHESLQRIRERKLVNFIDWGPASIQVALSKKSPYVQTSHRVSGLMLASHTSIRHLFSRCLSQYDKLRKKQAFLDNYRKFPMFADNDLSEFDESRDIIESLVDEYKACESPDYIKWGMEDPGQLMTGEGNASGVADPKLAF</sequence>
<dbReference type="EMBL" id="U03990">
    <property type="protein sequence ID" value="AAA20654.1"/>
    <property type="molecule type" value="Genomic_DNA"/>
</dbReference>
<dbReference type="EMBL" id="AB005237">
    <property type="protein sequence ID" value="BAB09656.1"/>
    <property type="molecule type" value="Genomic_DNA"/>
</dbReference>
<dbReference type="EMBL" id="CP002688">
    <property type="protein sequence ID" value="AED90900.1"/>
    <property type="molecule type" value="Genomic_DNA"/>
</dbReference>
<dbReference type="EMBL" id="BT030394">
    <property type="protein sequence ID" value="ABO45697.1"/>
    <property type="molecule type" value="mRNA"/>
</dbReference>
<dbReference type="PIR" id="T50558">
    <property type="entry name" value="T50558"/>
</dbReference>
<dbReference type="SMR" id="P38558"/>
<dbReference type="BioGRID" id="15724">
    <property type="interactions" value="6"/>
</dbReference>
<dbReference type="FunCoup" id="P38558">
    <property type="interactions" value="3960"/>
</dbReference>
<dbReference type="STRING" id="3702.P38558"/>
<dbReference type="PaxDb" id="3702-AT5G05620.1"/>
<dbReference type="ProteomicsDB" id="232989"/>
<dbReference type="EnsemblPlants" id="AT5G05620.1">
    <property type="protein sequence ID" value="AT5G05620.1"/>
    <property type="gene ID" value="AT5G05620"/>
</dbReference>
<dbReference type="GeneID" id="830445"/>
<dbReference type="Gramene" id="AT5G05620.1">
    <property type="protein sequence ID" value="AT5G05620.1"/>
    <property type="gene ID" value="AT5G05620"/>
</dbReference>
<dbReference type="KEGG" id="ath:AT5G05620"/>
<dbReference type="Araport" id="AT5G05620"/>
<dbReference type="TAIR" id="AT5G05620">
    <property type="gene designation" value="GCP2"/>
</dbReference>
<dbReference type="eggNOG" id="KOG1374">
    <property type="taxonomic scope" value="Eukaryota"/>
</dbReference>
<dbReference type="HOGENOM" id="CLU_015718_1_0_1"/>
<dbReference type="InParanoid" id="P38558"/>
<dbReference type="OMA" id="QTYSIFP"/>
<dbReference type="OrthoDB" id="1919198at2759"/>
<dbReference type="PhylomeDB" id="P38558"/>
<dbReference type="PRO" id="PR:P38558"/>
<dbReference type="Proteomes" id="UP000006548">
    <property type="component" value="Chromosome 5"/>
</dbReference>
<dbReference type="ExpressionAtlas" id="P38558">
    <property type="expression patterns" value="baseline and differential"/>
</dbReference>
<dbReference type="GO" id="GO:0005938">
    <property type="term" value="C:cell cortex"/>
    <property type="evidence" value="ECO:0007669"/>
    <property type="project" value="UniProtKB-SubCell"/>
</dbReference>
<dbReference type="GO" id="GO:0005737">
    <property type="term" value="C:cytoplasm"/>
    <property type="evidence" value="ECO:0007005"/>
    <property type="project" value="TAIR"/>
</dbReference>
<dbReference type="GO" id="GO:0000930">
    <property type="term" value="C:gamma-tubulin complex"/>
    <property type="evidence" value="ECO:0007669"/>
    <property type="project" value="InterPro"/>
</dbReference>
<dbReference type="GO" id="GO:0005874">
    <property type="term" value="C:microtubule"/>
    <property type="evidence" value="ECO:0000314"/>
    <property type="project" value="TAIR"/>
</dbReference>
<dbReference type="GO" id="GO:0005739">
    <property type="term" value="C:mitochondrion"/>
    <property type="evidence" value="ECO:0007005"/>
    <property type="project" value="TAIR"/>
</dbReference>
<dbReference type="GO" id="GO:0005635">
    <property type="term" value="C:nuclear envelope"/>
    <property type="evidence" value="ECO:0000314"/>
    <property type="project" value="TAIR"/>
</dbReference>
<dbReference type="GO" id="GO:0005886">
    <property type="term" value="C:plasma membrane"/>
    <property type="evidence" value="ECO:0000314"/>
    <property type="project" value="TAIR"/>
</dbReference>
<dbReference type="GO" id="GO:0005525">
    <property type="term" value="F:GTP binding"/>
    <property type="evidence" value="ECO:0007669"/>
    <property type="project" value="UniProtKB-KW"/>
</dbReference>
<dbReference type="GO" id="GO:0051641">
    <property type="term" value="P:cellular localization"/>
    <property type="evidence" value="ECO:0000315"/>
    <property type="project" value="TAIR"/>
</dbReference>
<dbReference type="GO" id="GO:0000911">
    <property type="term" value="P:cytokinesis by cell plate formation"/>
    <property type="evidence" value="ECO:0000315"/>
    <property type="project" value="TAIR"/>
</dbReference>
<dbReference type="GO" id="GO:0031122">
    <property type="term" value="P:cytoplasmic microtubule organization"/>
    <property type="evidence" value="ECO:0007669"/>
    <property type="project" value="InterPro"/>
</dbReference>
<dbReference type="GO" id="GO:0048366">
    <property type="term" value="P:leaf development"/>
    <property type="evidence" value="ECO:0000315"/>
    <property type="project" value="TAIR"/>
</dbReference>
<dbReference type="GO" id="GO:0007020">
    <property type="term" value="P:microtubule nucleation"/>
    <property type="evidence" value="ECO:0000315"/>
    <property type="project" value="TAIR"/>
</dbReference>
<dbReference type="GO" id="GO:0046785">
    <property type="term" value="P:microtubule polymerization"/>
    <property type="evidence" value="ECO:0000315"/>
    <property type="project" value="TAIR"/>
</dbReference>
<dbReference type="GO" id="GO:0009624">
    <property type="term" value="P:response to nematode"/>
    <property type="evidence" value="ECO:0000314"/>
    <property type="project" value="UniProtKB"/>
</dbReference>
<dbReference type="GO" id="GO:0048768">
    <property type="term" value="P:root hair cell tip growth"/>
    <property type="evidence" value="ECO:0000315"/>
    <property type="project" value="TAIR"/>
</dbReference>
<dbReference type="GO" id="GO:0010103">
    <property type="term" value="P:stomatal complex morphogenesis"/>
    <property type="evidence" value="ECO:0000315"/>
    <property type="project" value="TAIR"/>
</dbReference>
<dbReference type="CDD" id="cd02188">
    <property type="entry name" value="gamma_tubulin"/>
    <property type="match status" value="1"/>
</dbReference>
<dbReference type="FunFam" id="1.10.287.600:FF:000004">
    <property type="entry name" value="Tubulin gamma chain"/>
    <property type="match status" value="1"/>
</dbReference>
<dbReference type="FunFam" id="3.30.1330.20:FF:000003">
    <property type="entry name" value="Tubulin gamma chain"/>
    <property type="match status" value="1"/>
</dbReference>
<dbReference type="FunFam" id="3.40.50.1440:FF:000010">
    <property type="entry name" value="Tubulin gamma chain"/>
    <property type="match status" value="1"/>
</dbReference>
<dbReference type="Gene3D" id="1.10.287.600">
    <property type="entry name" value="Helix hairpin bin"/>
    <property type="match status" value="1"/>
</dbReference>
<dbReference type="Gene3D" id="3.30.1330.20">
    <property type="entry name" value="Tubulin/FtsZ, C-terminal domain"/>
    <property type="match status" value="1"/>
</dbReference>
<dbReference type="Gene3D" id="3.40.50.1440">
    <property type="entry name" value="Tubulin/FtsZ, GTPase domain"/>
    <property type="match status" value="1"/>
</dbReference>
<dbReference type="InterPro" id="IPR002454">
    <property type="entry name" value="Gamma_tubulin"/>
</dbReference>
<dbReference type="InterPro" id="IPR008280">
    <property type="entry name" value="Tub_FtsZ_C"/>
</dbReference>
<dbReference type="InterPro" id="IPR000217">
    <property type="entry name" value="Tubulin"/>
</dbReference>
<dbReference type="InterPro" id="IPR037103">
    <property type="entry name" value="Tubulin/FtsZ-like_C"/>
</dbReference>
<dbReference type="InterPro" id="IPR018316">
    <property type="entry name" value="Tubulin/FtsZ_2-layer-sand-dom"/>
</dbReference>
<dbReference type="InterPro" id="IPR036525">
    <property type="entry name" value="Tubulin/FtsZ_GTPase_sf"/>
</dbReference>
<dbReference type="InterPro" id="IPR023123">
    <property type="entry name" value="Tubulin_C"/>
</dbReference>
<dbReference type="InterPro" id="IPR017975">
    <property type="entry name" value="Tubulin_CS"/>
</dbReference>
<dbReference type="InterPro" id="IPR003008">
    <property type="entry name" value="Tubulin_FtsZ_GTPase"/>
</dbReference>
<dbReference type="PANTHER" id="PTHR11588">
    <property type="entry name" value="TUBULIN"/>
    <property type="match status" value="1"/>
</dbReference>
<dbReference type="Pfam" id="PF00091">
    <property type="entry name" value="Tubulin"/>
    <property type="match status" value="1"/>
</dbReference>
<dbReference type="Pfam" id="PF03953">
    <property type="entry name" value="Tubulin_C"/>
    <property type="match status" value="1"/>
</dbReference>
<dbReference type="PRINTS" id="PR01164">
    <property type="entry name" value="GAMMATUBULIN"/>
</dbReference>
<dbReference type="PRINTS" id="PR01161">
    <property type="entry name" value="TUBULIN"/>
</dbReference>
<dbReference type="SMART" id="SM00864">
    <property type="entry name" value="Tubulin"/>
    <property type="match status" value="1"/>
</dbReference>
<dbReference type="SMART" id="SM00865">
    <property type="entry name" value="Tubulin_C"/>
    <property type="match status" value="1"/>
</dbReference>
<dbReference type="SUPFAM" id="SSF55307">
    <property type="entry name" value="Tubulin C-terminal domain-like"/>
    <property type="match status" value="1"/>
</dbReference>
<dbReference type="SUPFAM" id="SSF52490">
    <property type="entry name" value="Tubulin nucleotide-binding domain-like"/>
    <property type="match status" value="1"/>
</dbReference>
<dbReference type="PROSITE" id="PS00227">
    <property type="entry name" value="TUBULIN"/>
    <property type="match status" value="1"/>
</dbReference>
<keyword id="KW-0963">Cytoplasm</keyword>
<keyword id="KW-0206">Cytoskeleton</keyword>
<keyword id="KW-0342">GTP-binding</keyword>
<keyword id="KW-0493">Microtubule</keyword>
<keyword id="KW-0547">Nucleotide-binding</keyword>
<keyword id="KW-0539">Nucleus</keyword>
<keyword id="KW-1185">Reference proteome</keyword>
<comment type="function">
    <text evidence="4">Tubulin is the major constituent of microtubules. The gamma chain is found at microtubule organizing centers (MTOC) such as the spindle poles, suggesting that it is involved in the minus-end nucleation of microtubule assembly.</text>
</comment>
<comment type="function">
    <text evidence="4">Gamma-tubulin complex is essential for the control of microtubular network remodeling in the course of initiation and development of giant-feeding cells, and for the successful reproduction of nematodes (e.g. Meloidogyne spp.) in their plant hosts.</text>
</comment>
<comment type="subunit">
    <text evidence="4">Gamma-tubulin complex is composed of gamma-tubulin and GCP proteins.</text>
</comment>
<comment type="subcellular location">
    <subcellularLocation>
        <location evidence="2">Cytoplasm</location>
        <location evidence="2">Cytoskeleton</location>
        <location evidence="2">Microtubule organizing center</location>
    </subcellularLocation>
    <subcellularLocation>
        <location evidence="1">Cytoplasm</location>
    </subcellularLocation>
    <subcellularLocation>
        <location evidence="1">Nucleus</location>
    </subcellularLocation>
    <subcellularLocation>
        <location evidence="1">Cytoplasm</location>
        <location evidence="1">Cell cortex</location>
    </subcellularLocation>
    <text evidence="1">Present in discrete dots in the cytoplasm and cell cortex.</text>
</comment>
<comment type="induction">
    <text evidence="4">Up-regulated in galls upon nematode infection.</text>
</comment>
<comment type="disruption phenotype">
    <text evidence="4">Alteration of the morphology of feeding site and failure of nematode life cycle completion.</text>
</comment>
<comment type="similarity">
    <text evidence="5">Belongs to the tubulin family.</text>
</comment>
<name>TBG2_ARATH</name>
<feature type="chain" id="PRO_0000048446" description="Tubulin gamma-2 chain">
    <location>
        <begin position="1"/>
        <end position="474"/>
    </location>
</feature>
<feature type="binding site" evidence="3">
    <location>
        <begin position="142"/>
        <end position="148"/>
    </location>
    <ligand>
        <name>GTP</name>
        <dbReference type="ChEBI" id="CHEBI:37565"/>
    </ligand>
</feature>
<accession>P38558</accession>
<accession>A4IJ36</accession>
<gene>
    <name type="primary">TUBG2</name>
    <name type="ordered locus">At5g05620</name>
    <name type="ORF">MJJ3.1</name>
</gene>
<evidence type="ECO:0000250" key="1"/>
<evidence type="ECO:0000250" key="2">
    <source>
        <dbReference type="UniProtKB" id="P38557"/>
    </source>
</evidence>
<evidence type="ECO:0000255" key="3"/>
<evidence type="ECO:0000269" key="4">
    <source>
    </source>
</evidence>
<evidence type="ECO:0000305" key="5"/>
<reference key="1">
    <citation type="journal article" date="1994" name="Plant Cell">
        <title>Gamma-tubulin in Arabidopsis: gene sequence, immunoblot, and immunofluorescence studies.</title>
        <authorList>
            <person name="Liu B."/>
            <person name="Joshi H.C."/>
            <person name="Wilson T.J."/>
            <person name="Silflow C.D."/>
            <person name="Palevitz B.A."/>
            <person name="Snustad D.P."/>
        </authorList>
    </citation>
    <scope>NUCLEOTIDE SEQUENCE [GENOMIC DNA]</scope>
    <source>
        <strain>cv. Columbia</strain>
    </source>
</reference>
<reference key="2">
    <citation type="journal article" date="1997" name="DNA Res.">
        <title>Structural analysis of Arabidopsis thaliana chromosome 5. I. Sequence features of the 1.6 Mb regions covered by twenty physically assigned P1 clones.</title>
        <authorList>
            <person name="Sato S."/>
            <person name="Kotani H."/>
            <person name="Nakamura Y."/>
            <person name="Kaneko T."/>
            <person name="Asamizu E."/>
            <person name="Fukami M."/>
            <person name="Miyajima N."/>
            <person name="Tabata S."/>
        </authorList>
    </citation>
    <scope>NUCLEOTIDE SEQUENCE [LARGE SCALE GENOMIC DNA]</scope>
    <source>
        <strain>cv. Columbia</strain>
    </source>
</reference>
<reference key="3">
    <citation type="journal article" date="2017" name="Plant J.">
        <title>Araport11: a complete reannotation of the Arabidopsis thaliana reference genome.</title>
        <authorList>
            <person name="Cheng C.Y."/>
            <person name="Krishnakumar V."/>
            <person name="Chan A.P."/>
            <person name="Thibaud-Nissen F."/>
            <person name="Schobel S."/>
            <person name="Town C.D."/>
        </authorList>
    </citation>
    <scope>GENOME REANNOTATION</scope>
    <source>
        <strain>cv. Columbia</strain>
    </source>
</reference>
<reference key="4">
    <citation type="submission" date="2007-03" db="EMBL/GenBank/DDBJ databases">
        <title>Arabidopsis ORF clones.</title>
        <authorList>
            <person name="Kim C.J."/>
            <person name="Bautista V.R."/>
            <person name="Chen H."/>
            <person name="De Los Reyes C."/>
            <person name="Wu S.Y."/>
            <person name="Ecker J.R."/>
        </authorList>
    </citation>
    <scope>NUCLEOTIDE SEQUENCE [LARGE SCALE MRNA]</scope>
    <source>
        <strain>cv. Columbia</strain>
    </source>
</reference>
<reference key="5">
    <citation type="journal article" date="2011" name="PLoS Pathog.">
        <title>Feeding cells induced by phytoparasitic nematodes require gamma-tubulin ring complex for microtubule reorganization.</title>
        <authorList>
            <person name="Banora M.Y."/>
            <person name="Rodiuc N."/>
            <person name="Baldacci-Cresp F."/>
            <person name="Smertenko A."/>
            <person name="Bleve-Zacheo T."/>
            <person name="Mellilo M.T."/>
            <person name="Karimi M."/>
            <person name="Hilson P."/>
            <person name="Evrard J.L."/>
            <person name="Favery B."/>
            <person name="Engler G."/>
            <person name="Abad P."/>
            <person name="de Almeida Engler J."/>
        </authorList>
    </citation>
    <scope>FUNCTION IN NEMATODE INFECTION</scope>
    <scope>DISRUPTION PHENOTYPE</scope>
    <scope>INDUCTION BY NEMATODES</scope>
    <scope>SUBUNIT</scope>
</reference>